<feature type="chain" id="PRO_1000092178" description="Phosphoadenosine 5'-phosphosulfate reductase">
    <location>
        <begin position="1"/>
        <end position="243"/>
    </location>
</feature>
<feature type="active site" description="Nucleophile; cysteine thiosulfonate intermediate" evidence="1">
    <location>
        <position position="239"/>
    </location>
</feature>
<comment type="function">
    <text evidence="1">Catalyzes the formation of sulfite from phosphoadenosine 5'-phosphosulfate (PAPS) using thioredoxin as an electron donor.</text>
</comment>
<comment type="catalytic activity">
    <reaction evidence="1">
        <text>[thioredoxin]-disulfide + sulfite + adenosine 3',5'-bisphosphate + 2 H(+) = [thioredoxin]-dithiol + 3'-phosphoadenylyl sulfate</text>
        <dbReference type="Rhea" id="RHEA:11724"/>
        <dbReference type="Rhea" id="RHEA-COMP:10698"/>
        <dbReference type="Rhea" id="RHEA-COMP:10700"/>
        <dbReference type="ChEBI" id="CHEBI:15378"/>
        <dbReference type="ChEBI" id="CHEBI:17359"/>
        <dbReference type="ChEBI" id="CHEBI:29950"/>
        <dbReference type="ChEBI" id="CHEBI:50058"/>
        <dbReference type="ChEBI" id="CHEBI:58339"/>
        <dbReference type="ChEBI" id="CHEBI:58343"/>
        <dbReference type="EC" id="1.8.4.8"/>
    </reaction>
</comment>
<comment type="pathway">
    <text evidence="1">Sulfur metabolism; hydrogen sulfide biosynthesis; sulfite from sulfate: step 3/3.</text>
</comment>
<comment type="subcellular location">
    <subcellularLocation>
        <location evidence="1">Cytoplasm</location>
    </subcellularLocation>
</comment>
<comment type="similarity">
    <text evidence="1">Belongs to the PAPS reductase family. CysH subfamily.</text>
</comment>
<reference key="1">
    <citation type="journal article" date="2008" name="J. Bacteriol.">
        <title>Complete genome sequence of uropathogenic Proteus mirabilis, a master of both adherence and motility.</title>
        <authorList>
            <person name="Pearson M.M."/>
            <person name="Sebaihia M."/>
            <person name="Churcher C."/>
            <person name="Quail M.A."/>
            <person name="Seshasayee A.S."/>
            <person name="Luscombe N.M."/>
            <person name="Abdellah Z."/>
            <person name="Arrosmith C."/>
            <person name="Atkin B."/>
            <person name="Chillingworth T."/>
            <person name="Hauser H."/>
            <person name="Jagels K."/>
            <person name="Moule S."/>
            <person name="Mungall K."/>
            <person name="Norbertczak H."/>
            <person name="Rabbinowitsch E."/>
            <person name="Walker D."/>
            <person name="Whithead S."/>
            <person name="Thomson N.R."/>
            <person name="Rather P.N."/>
            <person name="Parkhill J."/>
            <person name="Mobley H.L.T."/>
        </authorList>
    </citation>
    <scope>NUCLEOTIDE SEQUENCE [LARGE SCALE GENOMIC DNA]</scope>
    <source>
        <strain>HI4320</strain>
    </source>
</reference>
<sequence>MSRLSLSQLVLLSIEEQRLALDEINQQLEQKTAIERVIWALEHLPNQFVLSSSFGIQAAVCLHLLTRQYPDIPVILTDTGYLFPETYQFIDELTSSLQLNLKVYRAEISSSWQEARYGKLWLQGIEGIERYNQINKVAPMEKALKELQAKTWFAGLRRQQSKSREHLPVLSIAKGIFKLLPIVDWDNKQIYQYLKQHNLPYHPLWEQGYLSVGDTHTTRKWQEGMSEEETRFFGLKRECGLHE</sequence>
<keyword id="KW-0963">Cytoplasm</keyword>
<keyword id="KW-0560">Oxidoreductase</keyword>
<keyword id="KW-1185">Reference proteome</keyword>
<evidence type="ECO:0000255" key="1">
    <source>
        <dbReference type="HAMAP-Rule" id="MF_00063"/>
    </source>
</evidence>
<protein>
    <recommendedName>
        <fullName evidence="1">Phosphoadenosine 5'-phosphosulfate reductase</fullName>
        <shortName evidence="1">PAPS reductase</shortName>
        <ecNumber evidence="1">1.8.4.8</ecNumber>
    </recommendedName>
    <alternativeName>
        <fullName evidence="1">3'-phosphoadenylylsulfate reductase</fullName>
    </alternativeName>
    <alternativeName>
        <fullName evidence="1">PAPS reductase, thioredoxin dependent</fullName>
    </alternativeName>
    <alternativeName>
        <fullName evidence="1">PAPS sulfotransferase</fullName>
    </alternativeName>
    <alternativeName>
        <fullName evidence="1">PAdoPS reductase</fullName>
    </alternativeName>
</protein>
<proteinExistence type="inferred from homology"/>
<organism>
    <name type="scientific">Proteus mirabilis (strain HI4320)</name>
    <dbReference type="NCBI Taxonomy" id="529507"/>
    <lineage>
        <taxon>Bacteria</taxon>
        <taxon>Pseudomonadati</taxon>
        <taxon>Pseudomonadota</taxon>
        <taxon>Gammaproteobacteria</taxon>
        <taxon>Enterobacterales</taxon>
        <taxon>Morganellaceae</taxon>
        <taxon>Proteus</taxon>
    </lineage>
</organism>
<name>CYSH_PROMH</name>
<gene>
    <name evidence="1" type="primary">cysH</name>
    <name type="ordered locus">PMI2248</name>
</gene>
<dbReference type="EC" id="1.8.4.8" evidence="1"/>
<dbReference type="EMBL" id="AM942759">
    <property type="protein sequence ID" value="CAR44461.1"/>
    <property type="molecule type" value="Genomic_DNA"/>
</dbReference>
<dbReference type="RefSeq" id="WP_012368298.1">
    <property type="nucleotide sequence ID" value="NC_010554.1"/>
</dbReference>
<dbReference type="SMR" id="B4F233"/>
<dbReference type="EnsemblBacteria" id="CAR44461">
    <property type="protein sequence ID" value="CAR44461"/>
    <property type="gene ID" value="PMI2248"/>
</dbReference>
<dbReference type="GeneID" id="6801654"/>
<dbReference type="KEGG" id="pmr:PMI2248"/>
<dbReference type="eggNOG" id="COG0175">
    <property type="taxonomic scope" value="Bacteria"/>
</dbReference>
<dbReference type="HOGENOM" id="CLU_044089_3_0_6"/>
<dbReference type="UniPathway" id="UPA00140">
    <property type="reaction ID" value="UER00206"/>
</dbReference>
<dbReference type="Proteomes" id="UP000008319">
    <property type="component" value="Chromosome"/>
</dbReference>
<dbReference type="GO" id="GO:0005737">
    <property type="term" value="C:cytoplasm"/>
    <property type="evidence" value="ECO:0007669"/>
    <property type="project" value="UniProtKB-SubCell"/>
</dbReference>
<dbReference type="GO" id="GO:0004604">
    <property type="term" value="F:phosphoadenylyl-sulfate reductase (thioredoxin) activity"/>
    <property type="evidence" value="ECO:0007669"/>
    <property type="project" value="UniProtKB-UniRule"/>
</dbReference>
<dbReference type="GO" id="GO:0070814">
    <property type="term" value="P:hydrogen sulfide biosynthetic process"/>
    <property type="evidence" value="ECO:0007669"/>
    <property type="project" value="UniProtKB-UniRule"/>
</dbReference>
<dbReference type="GO" id="GO:0019379">
    <property type="term" value="P:sulfate assimilation, phosphoadenylyl sulfate reduction by phosphoadenylyl-sulfate reductase (thioredoxin)"/>
    <property type="evidence" value="ECO:0007669"/>
    <property type="project" value="UniProtKB-UniRule"/>
</dbReference>
<dbReference type="CDD" id="cd23945">
    <property type="entry name" value="PAPS_reductase"/>
    <property type="match status" value="1"/>
</dbReference>
<dbReference type="FunFam" id="3.40.50.620:FF:000043">
    <property type="entry name" value="Phosphoadenosine phosphosulfate reductase"/>
    <property type="match status" value="1"/>
</dbReference>
<dbReference type="Gene3D" id="3.40.50.620">
    <property type="entry name" value="HUPs"/>
    <property type="match status" value="1"/>
</dbReference>
<dbReference type="HAMAP" id="MF_00063">
    <property type="entry name" value="CysH"/>
    <property type="match status" value="1"/>
</dbReference>
<dbReference type="InterPro" id="IPR004511">
    <property type="entry name" value="PAPS/APS_Rdtase"/>
</dbReference>
<dbReference type="InterPro" id="IPR002500">
    <property type="entry name" value="PAPS_reduct_dom"/>
</dbReference>
<dbReference type="InterPro" id="IPR011800">
    <property type="entry name" value="PAPS_reductase_CysH"/>
</dbReference>
<dbReference type="InterPro" id="IPR014729">
    <property type="entry name" value="Rossmann-like_a/b/a_fold"/>
</dbReference>
<dbReference type="NCBIfam" id="TIGR00434">
    <property type="entry name" value="cysH"/>
    <property type="match status" value="1"/>
</dbReference>
<dbReference type="NCBIfam" id="TIGR02057">
    <property type="entry name" value="PAPS_reductase"/>
    <property type="match status" value="1"/>
</dbReference>
<dbReference type="NCBIfam" id="NF002537">
    <property type="entry name" value="PRK02090.1"/>
    <property type="match status" value="1"/>
</dbReference>
<dbReference type="PANTHER" id="PTHR46509">
    <property type="entry name" value="PHOSPHOADENOSINE PHOSPHOSULFATE REDUCTASE"/>
    <property type="match status" value="1"/>
</dbReference>
<dbReference type="PANTHER" id="PTHR46509:SF1">
    <property type="entry name" value="PHOSPHOADENOSINE PHOSPHOSULFATE REDUCTASE"/>
    <property type="match status" value="1"/>
</dbReference>
<dbReference type="Pfam" id="PF01507">
    <property type="entry name" value="PAPS_reduct"/>
    <property type="match status" value="1"/>
</dbReference>
<dbReference type="PIRSF" id="PIRSF000857">
    <property type="entry name" value="PAPS_reductase"/>
    <property type="match status" value="1"/>
</dbReference>
<dbReference type="SUPFAM" id="SSF52402">
    <property type="entry name" value="Adenine nucleotide alpha hydrolases-like"/>
    <property type="match status" value="1"/>
</dbReference>
<accession>B4F233</accession>